<protein>
    <recommendedName>
        <fullName>Alcohol dehydrogenase E chain</fullName>
        <ecNumber>1.1.1.1</ecNumber>
    </recommendedName>
</protein>
<evidence type="ECO:0000250" key="1">
    <source>
        <dbReference type="UniProtKB" id="P06525"/>
    </source>
</evidence>
<evidence type="ECO:0000269" key="2">
    <source>
    </source>
</evidence>
<evidence type="ECO:0000269" key="3">
    <source>
    </source>
</evidence>
<evidence type="ECO:0000269" key="4">
    <source>
    </source>
</evidence>
<evidence type="ECO:0000305" key="5"/>
<evidence type="ECO:0007744" key="6">
    <source>
        <dbReference type="PDB" id="1A71"/>
    </source>
</evidence>
<evidence type="ECO:0007744" key="7">
    <source>
        <dbReference type="PDB" id="1A72"/>
    </source>
</evidence>
<evidence type="ECO:0007744" key="8">
    <source>
        <dbReference type="PDB" id="1ADB"/>
    </source>
</evidence>
<evidence type="ECO:0007744" key="9">
    <source>
        <dbReference type="PDB" id="1ADC"/>
    </source>
</evidence>
<evidence type="ECO:0007744" key="10">
    <source>
        <dbReference type="PDB" id="1ADF"/>
    </source>
</evidence>
<evidence type="ECO:0007744" key="11">
    <source>
        <dbReference type="PDB" id="1ADG"/>
    </source>
</evidence>
<evidence type="ECO:0007744" key="12">
    <source>
        <dbReference type="PDB" id="1AXE"/>
    </source>
</evidence>
<evidence type="ECO:0007744" key="13">
    <source>
        <dbReference type="PDB" id="1AXG"/>
    </source>
</evidence>
<evidence type="ECO:0007744" key="14">
    <source>
        <dbReference type="PDB" id="1BTO"/>
    </source>
</evidence>
<evidence type="ECO:0007744" key="15">
    <source>
        <dbReference type="PDB" id="1HET"/>
    </source>
</evidence>
<evidence type="ECO:0007744" key="16">
    <source>
        <dbReference type="PDB" id="1HEU"/>
    </source>
</evidence>
<evidence type="ECO:0007744" key="17">
    <source>
        <dbReference type="PDB" id="1HF3"/>
    </source>
</evidence>
<evidence type="ECO:0007744" key="18">
    <source>
        <dbReference type="PDB" id="1HLD"/>
    </source>
</evidence>
<evidence type="ECO:0007744" key="19">
    <source>
        <dbReference type="PDB" id="1JU9"/>
    </source>
</evidence>
<evidence type="ECO:0007744" key="20">
    <source>
        <dbReference type="PDB" id="1LDE"/>
    </source>
</evidence>
<evidence type="ECO:0007744" key="21">
    <source>
        <dbReference type="PDB" id="1LDY"/>
    </source>
</evidence>
<evidence type="ECO:0007744" key="22">
    <source>
        <dbReference type="PDB" id="1MG0"/>
    </source>
</evidence>
<evidence type="ECO:0007744" key="23">
    <source>
        <dbReference type="PDB" id="1MGO"/>
    </source>
</evidence>
<evidence type="ECO:0007744" key="24">
    <source>
        <dbReference type="PDB" id="1N8K"/>
    </source>
</evidence>
<evidence type="ECO:0007744" key="25">
    <source>
        <dbReference type="PDB" id="1N92"/>
    </source>
</evidence>
<evidence type="ECO:0007744" key="26">
    <source>
        <dbReference type="PDB" id="1P1R"/>
    </source>
</evidence>
<evidence type="ECO:0007744" key="27">
    <source>
        <dbReference type="PDB" id="1QLH"/>
    </source>
</evidence>
<evidence type="ECO:0007744" key="28">
    <source>
        <dbReference type="PDB" id="1QLJ"/>
    </source>
</evidence>
<evidence type="ECO:0007744" key="29">
    <source>
        <dbReference type="PDB" id="1QV6"/>
    </source>
</evidence>
<evidence type="ECO:0007744" key="30">
    <source>
        <dbReference type="PDB" id="1QV7"/>
    </source>
</evidence>
<evidence type="ECO:0007744" key="31">
    <source>
        <dbReference type="PDB" id="1YE3"/>
    </source>
</evidence>
<evidence type="ECO:0007744" key="32">
    <source>
        <dbReference type="PDB" id="2JHF"/>
    </source>
</evidence>
<evidence type="ECO:0007744" key="33">
    <source>
        <dbReference type="PDB" id="2JHG"/>
    </source>
</evidence>
<evidence type="ECO:0007744" key="34">
    <source>
        <dbReference type="PDB" id="2OHX"/>
    </source>
</evidence>
<evidence type="ECO:0007744" key="35">
    <source>
        <dbReference type="PDB" id="2OXI"/>
    </source>
</evidence>
<evidence type="ECO:0007744" key="36">
    <source>
        <dbReference type="PDB" id="3BTO"/>
    </source>
</evidence>
<evidence type="ECO:0007744" key="37">
    <source>
        <dbReference type="PDB" id="3OQ6"/>
    </source>
</evidence>
<evidence type="ECO:0007744" key="38">
    <source>
        <dbReference type="PDB" id="4DWV"/>
    </source>
</evidence>
<evidence type="ECO:0007744" key="39">
    <source>
        <dbReference type="PDB" id="4DXH"/>
    </source>
</evidence>
<evidence type="ECO:0007744" key="40">
    <source>
        <dbReference type="PDB" id="4NFH"/>
    </source>
</evidence>
<evidence type="ECO:0007744" key="41">
    <source>
        <dbReference type="PDB" id="4NFS"/>
    </source>
</evidence>
<evidence type="ECO:0007744" key="42">
    <source>
        <dbReference type="PDB" id="4NG5"/>
    </source>
</evidence>
<evidence type="ECO:0007744" key="43">
    <source>
        <dbReference type="PDB" id="4XD2"/>
    </source>
</evidence>
<evidence type="ECO:0007744" key="44">
    <source>
        <dbReference type="PDB" id="5ADH"/>
    </source>
</evidence>
<evidence type="ECO:0007744" key="45">
    <source>
        <dbReference type="PDB" id="6ADH"/>
    </source>
</evidence>
<evidence type="ECO:0007744" key="46">
    <source>
        <dbReference type="PDB" id="7ADH"/>
    </source>
</evidence>
<evidence type="ECO:0007744" key="47">
    <source>
        <dbReference type="PDB" id="8ADH"/>
    </source>
</evidence>
<evidence type="ECO:0007829" key="48">
    <source>
        <dbReference type="PDB" id="1ADG"/>
    </source>
</evidence>
<evidence type="ECO:0007829" key="49">
    <source>
        <dbReference type="PDB" id="1MGO"/>
    </source>
</evidence>
<evidence type="ECO:0007829" key="50">
    <source>
        <dbReference type="PDB" id="2JHF"/>
    </source>
</evidence>
<evidence type="ECO:0007829" key="51">
    <source>
        <dbReference type="PDB" id="4NFS"/>
    </source>
</evidence>
<evidence type="ECO:0007829" key="52">
    <source>
        <dbReference type="PDB" id="6ADH"/>
    </source>
</evidence>
<evidence type="ECO:0007829" key="53">
    <source>
        <dbReference type="PDB" id="6NBB"/>
    </source>
</evidence>
<evidence type="ECO:0007829" key="54">
    <source>
        <dbReference type="PDB" id="7ADH"/>
    </source>
</evidence>
<sequence>MSTAGKVIKCKAAVLWEEKKPFSIEEVEVAPPKAHEVRIKMVATGICRSDDHVVSGTLVTPLPVIAGHEAAGIVESIGEGVTTVRPGDKVIPLFTPQCGKCRVCKHPEGNFCLKNDLSMPRGTMQDGTSRFTCRGKPIHHFLGTSTFSQYTVVDEISVAKIDAASPLEKVCLIGCGFSTGYGSAVKVAKVTQGSTCAVFGLGGVGLSVIMGCKAAGAARIIGVDINKDKFAKAKEVGATECVNPQDYKKPIQEVLTEMSNGGVDFSFEVIGRLDTMVTALSCCQEAYGVSVIVGVPPDSQNLSMNPMLLLSGRTWKGAIFGGFKSKDSVPKLVADFMAKKFALDPLITHVLPFEKINEGFDLLRSGESIRTILTF</sequence>
<feature type="initiator methionine" description="Removed" evidence="4">
    <location>
        <position position="1"/>
    </location>
</feature>
<feature type="chain" id="PRO_0000160656" description="Alcohol dehydrogenase E chain">
    <location>
        <begin position="2"/>
        <end position="375"/>
    </location>
</feature>
<feature type="binding site" evidence="2 3 6 7 8 9 10 11 12 13 14 15 18 19 20 21 22 23 24 25 26 27 28 29 30 31 33 34 36 37 38 39 40 41 42 43 44 45 46 47">
    <location>
        <position position="47"/>
    </location>
    <ligand>
        <name>Zn(2+)</name>
        <dbReference type="ChEBI" id="CHEBI:29105"/>
        <label>1</label>
        <note>catalytic</note>
    </ligand>
</feature>
<feature type="binding site" evidence="6 9 12 13 18 22 30 37 38 39 40 41 42">
    <location>
        <position position="49"/>
    </location>
    <ligand>
        <name>an alcohol</name>
        <dbReference type="ChEBI" id="CHEBI:30879"/>
    </ligand>
</feature>
<feature type="binding site" evidence="1">
    <location>
        <position position="49"/>
    </location>
    <ligand>
        <name>NAD(+)</name>
        <dbReference type="ChEBI" id="CHEBI:57540"/>
    </ligand>
</feature>
<feature type="binding site" evidence="1">
    <location>
        <position position="49"/>
    </location>
    <ligand>
        <name>Zn(2+)</name>
        <dbReference type="ChEBI" id="CHEBI:29105"/>
        <label>1</label>
        <note>catalytic</note>
    </ligand>
</feature>
<feature type="binding site" evidence="6 9 12 18 22 30 37 38 39 40 41 42">
    <location>
        <position position="68"/>
    </location>
    <ligand>
        <name>an alcohol</name>
        <dbReference type="ChEBI" id="CHEBI:30879"/>
    </ligand>
</feature>
<feature type="binding site" evidence="2 3 6 7 8 9 10 11 12 13 14 15 18 19 20 21 22 23 24 25 26 27 28 29 30 31 33 34 36 37 38 39 40 41 42 43 44 45 46 47">
    <location>
        <position position="68"/>
    </location>
    <ligand>
        <name>Zn(2+)</name>
        <dbReference type="ChEBI" id="CHEBI:29105"/>
        <label>1</label>
        <note>catalytic</note>
    </ligand>
</feature>
<feature type="binding site" evidence="2 3 6 7 8 9 10 11 12 13 14 15 18 19 20 21 22 23 24 25 26 27 28 29 30 31 33 34 35 36 37 38 39 40 41 42 43 44 45 46 47">
    <location>
        <position position="98"/>
    </location>
    <ligand>
        <name>Zn(2+)</name>
        <dbReference type="ChEBI" id="CHEBI:29105"/>
        <label>2</label>
    </ligand>
</feature>
<feature type="binding site" evidence="2 3 6 7 8 9 10 11 12 13 14 15 18 19 20 21 22 23 24 25 26 27 28 29 30 31 33 34 35 36 37 38 39 40 41 42 43 44 45 46 47">
    <location>
        <position position="101"/>
    </location>
    <ligand>
        <name>Zn(2+)</name>
        <dbReference type="ChEBI" id="CHEBI:29105"/>
        <label>2</label>
    </ligand>
</feature>
<feature type="binding site" evidence="2 3 6 7 8 9 10 11 12 13 14 15 18 19 20 21 22 23 24 25 26 27 28 29 30 31 33 34 35 36 37 38 39 40 41 42 43 44 45 46 47">
    <location>
        <position position="104"/>
    </location>
    <ligand>
        <name>Zn(2+)</name>
        <dbReference type="ChEBI" id="CHEBI:29105"/>
        <label>2</label>
    </ligand>
</feature>
<feature type="binding site" evidence="2 3 6 7 8 9 10 11 12 13 14 15 18 19 20 21 22 23 24 25 26 27 28 29 30 31 33 34 35 36 37 38 39 40 41 42 43 44 45 46 47">
    <location>
        <position position="112"/>
    </location>
    <ligand>
        <name>Zn(2+)</name>
        <dbReference type="ChEBI" id="CHEBI:29105"/>
        <label>2</label>
    </ligand>
</feature>
<feature type="binding site" evidence="2 6 7 8 9 10 11 12 13 14 15 18 19 20 21 22 23 24 25 26 27 28 29 30 31 33 34 36 37 38 39 40 41 42 43 44 45 46 47">
    <location>
        <position position="175"/>
    </location>
    <ligand>
        <name>Zn(2+)</name>
        <dbReference type="ChEBI" id="CHEBI:29105"/>
        <label>1</label>
        <note>catalytic</note>
    </ligand>
</feature>
<feature type="binding site" evidence="2 8 12 14 15 16 17 18 19 20 21 22 23 24 25 26 29 30 32 33 34 35 36 37 38 39 40 43 45">
    <location>
        <begin position="200"/>
        <end position="205"/>
    </location>
    <ligand>
        <name>NAD(+)</name>
        <dbReference type="ChEBI" id="CHEBI:57540"/>
    </ligand>
</feature>
<feature type="binding site" evidence="2 6 8 12 13 14 15 16 17 18 19 20 21 22 23 24 25 26 27 29 30 32 33 34 35 36 37 38 39 40 41 42 43 44 45">
    <location>
        <position position="224"/>
    </location>
    <ligand>
        <name>NAD(+)</name>
        <dbReference type="ChEBI" id="CHEBI:57540"/>
    </ligand>
</feature>
<feature type="binding site" evidence="2 6 8 12 13 14 15 16 17 18 19 20 23 24 25 27 32 33 34 35 37 38 39 40 41 42 43 44 45">
    <location>
        <position position="229"/>
    </location>
    <ligand>
        <name>NAD(+)</name>
        <dbReference type="ChEBI" id="CHEBI:57540"/>
    </ligand>
</feature>
<feature type="binding site" evidence="2 6 8 12 13 14 15 16 17 18 20 21 22 23 24 25 26 27 29 30 32 33 34 35 36 37 38 39 40 41 42 43 45">
    <location>
        <begin position="293"/>
        <end position="295"/>
    </location>
    <ligand>
        <name>NAD(+)</name>
        <dbReference type="ChEBI" id="CHEBI:57540"/>
    </ligand>
</feature>
<feature type="binding site" evidence="1">
    <location>
        <position position="293"/>
    </location>
    <ligand>
        <name>NAD(+)</name>
        <dbReference type="ChEBI" id="CHEBI:57540"/>
    </ligand>
</feature>
<feature type="binding site" evidence="1">
    <location>
        <position position="320"/>
    </location>
    <ligand>
        <name>NAD(+)</name>
        <dbReference type="ChEBI" id="CHEBI:57540"/>
    </ligand>
</feature>
<feature type="binding site" evidence="2 6 8 12 13 14 15 16 17 18 20 21 22 23 24 25 26 29 30 32 33 34 35 36 37 38 39 40 41 42 43 45">
    <location>
        <position position="370"/>
    </location>
    <ligand>
        <name>NAD(+)</name>
        <dbReference type="ChEBI" id="CHEBI:57540"/>
    </ligand>
</feature>
<feature type="modified residue" description="N-acetylserine" evidence="4">
    <location>
        <position position="2"/>
    </location>
</feature>
<feature type="helix" evidence="48">
    <location>
        <begin position="3"/>
        <end position="5"/>
    </location>
</feature>
<feature type="strand" evidence="50">
    <location>
        <begin position="8"/>
        <end position="15"/>
    </location>
</feature>
<feature type="strand" evidence="53">
    <location>
        <begin position="17"/>
        <end position="20"/>
    </location>
</feature>
<feature type="strand" evidence="50">
    <location>
        <begin position="23"/>
        <end position="29"/>
    </location>
</feature>
<feature type="strand" evidence="50">
    <location>
        <begin position="36"/>
        <end position="45"/>
    </location>
</feature>
<feature type="helix" evidence="50">
    <location>
        <begin position="48"/>
        <end position="54"/>
    </location>
</feature>
<feature type="strand" evidence="49">
    <location>
        <begin position="56"/>
        <end position="58"/>
    </location>
</feature>
<feature type="strand" evidence="50">
    <location>
        <begin position="62"/>
        <end position="64"/>
    </location>
</feature>
<feature type="strand" evidence="50">
    <location>
        <begin position="69"/>
        <end position="77"/>
    </location>
</feature>
<feature type="strand" evidence="50">
    <location>
        <begin position="89"/>
        <end position="92"/>
    </location>
</feature>
<feature type="strand" evidence="51">
    <location>
        <begin position="99"/>
        <end position="101"/>
    </location>
</feature>
<feature type="helix" evidence="50">
    <location>
        <begin position="102"/>
        <end position="105"/>
    </location>
</feature>
<feature type="strand" evidence="51">
    <location>
        <begin position="106"/>
        <end position="108"/>
    </location>
</feature>
<feature type="strand" evidence="50">
    <location>
        <begin position="116"/>
        <end position="119"/>
    </location>
</feature>
<feature type="strand" evidence="52">
    <location>
        <begin position="125"/>
        <end position="127"/>
    </location>
</feature>
<feature type="strand" evidence="50">
    <location>
        <begin position="130"/>
        <end position="133"/>
    </location>
</feature>
<feature type="strand" evidence="50">
    <location>
        <begin position="136"/>
        <end position="139"/>
    </location>
</feature>
<feature type="turn" evidence="50">
    <location>
        <begin position="142"/>
        <end position="144"/>
    </location>
</feature>
<feature type="strand" evidence="50">
    <location>
        <begin position="147"/>
        <end position="154"/>
    </location>
</feature>
<feature type="helix" evidence="50">
    <location>
        <begin position="155"/>
        <end position="157"/>
    </location>
</feature>
<feature type="strand" evidence="50">
    <location>
        <begin position="158"/>
        <end position="160"/>
    </location>
</feature>
<feature type="helix" evidence="50">
    <location>
        <begin position="167"/>
        <end position="170"/>
    </location>
</feature>
<feature type="helix" evidence="50">
    <location>
        <begin position="171"/>
        <end position="174"/>
    </location>
</feature>
<feature type="helix" evidence="50">
    <location>
        <begin position="176"/>
        <end position="185"/>
    </location>
</feature>
<feature type="turn" evidence="50">
    <location>
        <begin position="186"/>
        <end position="188"/>
    </location>
</feature>
<feature type="strand" evidence="50">
    <location>
        <begin position="195"/>
        <end position="199"/>
    </location>
</feature>
<feature type="helix" evidence="50">
    <location>
        <begin position="203"/>
        <end position="214"/>
    </location>
</feature>
<feature type="strand" evidence="50">
    <location>
        <begin position="218"/>
        <end position="223"/>
    </location>
</feature>
<feature type="helix" evidence="50">
    <location>
        <begin position="227"/>
        <end position="229"/>
    </location>
</feature>
<feature type="helix" evidence="50">
    <location>
        <begin position="230"/>
        <end position="235"/>
    </location>
</feature>
<feature type="strand" evidence="50">
    <location>
        <begin position="239"/>
        <end position="242"/>
    </location>
</feature>
<feature type="helix" evidence="50">
    <location>
        <begin position="244"/>
        <end position="246"/>
    </location>
</feature>
<feature type="helix" evidence="50">
    <location>
        <begin position="251"/>
        <end position="258"/>
    </location>
</feature>
<feature type="strand" evidence="50">
    <location>
        <begin position="263"/>
        <end position="268"/>
    </location>
</feature>
<feature type="helix" evidence="50">
    <location>
        <begin position="273"/>
        <end position="282"/>
    </location>
</feature>
<feature type="turn" evidence="50">
    <location>
        <begin position="285"/>
        <end position="287"/>
    </location>
</feature>
<feature type="strand" evidence="50">
    <location>
        <begin position="289"/>
        <end position="292"/>
    </location>
</feature>
<feature type="strand" evidence="52">
    <location>
        <begin position="297"/>
        <end position="299"/>
    </location>
</feature>
<feature type="strand" evidence="50">
    <location>
        <begin position="302"/>
        <end position="304"/>
    </location>
</feature>
<feature type="helix" evidence="50">
    <location>
        <begin position="307"/>
        <end position="310"/>
    </location>
</feature>
<feature type="strand" evidence="50">
    <location>
        <begin position="314"/>
        <end position="317"/>
    </location>
</feature>
<feature type="helix" evidence="50">
    <location>
        <begin position="320"/>
        <end position="322"/>
    </location>
</feature>
<feature type="helix" evidence="50">
    <location>
        <begin position="325"/>
        <end position="337"/>
    </location>
</feature>
<feature type="strand" evidence="54">
    <location>
        <begin position="338"/>
        <end position="341"/>
    </location>
</feature>
<feature type="helix" evidence="50">
    <location>
        <begin position="344"/>
        <end position="346"/>
    </location>
</feature>
<feature type="strand" evidence="50">
    <location>
        <begin position="347"/>
        <end position="352"/>
    </location>
</feature>
<feature type="helix" evidence="50">
    <location>
        <begin position="353"/>
        <end position="355"/>
    </location>
</feature>
<feature type="helix" evidence="50">
    <location>
        <begin position="356"/>
        <end position="364"/>
    </location>
</feature>
<feature type="strand" evidence="52">
    <location>
        <begin position="365"/>
        <end position="367"/>
    </location>
</feature>
<feature type="strand" evidence="50">
    <location>
        <begin position="369"/>
        <end position="374"/>
    </location>
</feature>
<reference key="1">
    <citation type="journal article" date="1991" name="J. Biol. Chem.">
        <title>Isoenzymes of horse liver alcohol dehydrogenase active on ethanol and steroids. cDNA cloning, expression, and comparison of active sites.</title>
        <authorList>
            <person name="Park D.H."/>
            <person name="Plapp B.V."/>
        </authorList>
    </citation>
    <scope>NUCLEOTIDE SEQUENCE [MRNA]</scope>
    <source>
        <tissue>Liver</tissue>
    </source>
</reference>
<reference key="2">
    <citation type="journal article" date="1970" name="Eur. J. Biochem.">
        <title>Horse liver alcohol dehydrogenase. On the primary structures of the isoenzymes.</title>
        <authorList>
            <person name="Joernvall H."/>
        </authorList>
    </citation>
    <scope>PROTEIN SEQUENCE OF 2-375</scope>
    <scope>ACETYLATION AT SER-2</scope>
    <source>
        <tissue>Liver</tissue>
    </source>
</reference>
<reference key="3">
    <citation type="journal article" date="1976" name="J. Mol. Biol.">
        <title>Three-dimensional structure of horse liver alcohol dehydrogenase at 2.4-A resolution.</title>
        <authorList>
            <person name="Eklund H."/>
            <person name="Nordstroem B."/>
            <person name="Zeppezauer E."/>
            <person name="Soederlund G."/>
            <person name="Ohlsson I."/>
            <person name="Boiwe T."/>
            <person name="Soederberg B.-O."/>
            <person name="Tapia O."/>
            <person name="Braenden C.-I."/>
            <person name="Aakeson A."/>
        </authorList>
    </citation>
    <scope>X-RAY CRYSTALLOGRAPHY (2.4 ANGSTROMS)</scope>
</reference>
<reference key="4">
    <citation type="journal article" date="1984" name="Biochemistry">
        <title>Crystallographic investigations of nicotinamide adenine dinucleotide binding to horse liver alcohol dehydrogenase.</title>
        <authorList>
            <person name="Eklund H."/>
            <person name="Samama J.-P."/>
            <person name="Jones T.A."/>
        </authorList>
    </citation>
    <scope>X-RAY CRYSTALLOGRAPHY (2.9 ANGSTROMS)</scope>
</reference>
<reference key="5">
    <citation type="journal article" date="1994" name="Acta Crystallogr. D">
        <title>Refined crystal structure of liver alcohol dehydrogenase-NADH complex at 1.8-A resolution.</title>
        <authorList>
            <person name="Al-Karadaghi S."/>
            <person name="Cedergren-Zeppezauer E.S."/>
            <person name="Hovmoeller S."/>
            <person name="Petratos K."/>
            <person name="Terry H."/>
            <person name="Wilson K.S."/>
        </authorList>
    </citation>
    <scope>X-RAY CRYSTALLOGRAPHY (1.80 ANGSTROMS) OF 2-375 IN COMPLEX WITH NAD AND ZINC</scope>
    <scope>COFACTOR</scope>
</reference>
<organism>
    <name type="scientific">Equus caballus</name>
    <name type="common">Horse</name>
    <dbReference type="NCBI Taxonomy" id="9796"/>
    <lineage>
        <taxon>Eukaryota</taxon>
        <taxon>Metazoa</taxon>
        <taxon>Chordata</taxon>
        <taxon>Craniata</taxon>
        <taxon>Vertebrata</taxon>
        <taxon>Euteleostomi</taxon>
        <taxon>Mammalia</taxon>
        <taxon>Eutheria</taxon>
        <taxon>Laurasiatheria</taxon>
        <taxon>Perissodactyla</taxon>
        <taxon>Equidae</taxon>
        <taxon>Equus</taxon>
    </lineage>
</organism>
<name>ADH1E_HORSE</name>
<keyword id="KW-0002">3D-structure</keyword>
<keyword id="KW-0007">Acetylation</keyword>
<keyword id="KW-0963">Cytoplasm</keyword>
<keyword id="KW-0903">Direct protein sequencing</keyword>
<keyword id="KW-0479">Metal-binding</keyword>
<keyword id="KW-0520">NAD</keyword>
<keyword id="KW-0560">Oxidoreductase</keyword>
<keyword id="KW-1185">Reference proteome</keyword>
<keyword id="KW-0862">Zinc</keyword>
<dbReference type="EC" id="1.1.1.1"/>
<dbReference type="EMBL" id="M64864">
    <property type="protein sequence ID" value="AAA30931.1"/>
    <property type="molecule type" value="mRNA"/>
</dbReference>
<dbReference type="PIR" id="A39872">
    <property type="entry name" value="DEHOAL"/>
</dbReference>
<dbReference type="RefSeq" id="NP_001075997.1">
    <property type="nucleotide sequence ID" value="NM_001082528.1"/>
</dbReference>
<dbReference type="PDB" id="1A71">
    <property type="method" value="X-ray"/>
    <property type="resolution" value="2.00 A"/>
    <property type="chains" value="A/B=2-375"/>
</dbReference>
<dbReference type="PDB" id="1A72">
    <property type="method" value="X-ray"/>
    <property type="resolution" value="2.60 A"/>
    <property type="chains" value="A=2-375"/>
</dbReference>
<dbReference type="PDB" id="1ADB">
    <property type="method" value="X-ray"/>
    <property type="resolution" value="2.40 A"/>
    <property type="chains" value="A/B=2-375"/>
</dbReference>
<dbReference type="PDB" id="1ADC">
    <property type="method" value="X-ray"/>
    <property type="resolution" value="2.70 A"/>
    <property type="chains" value="A/B=2-375"/>
</dbReference>
<dbReference type="PDB" id="1ADF">
    <property type="method" value="X-ray"/>
    <property type="resolution" value="2.90 A"/>
    <property type="chains" value="A=2-375"/>
</dbReference>
<dbReference type="PDB" id="1ADG">
    <property type="method" value="X-ray"/>
    <property type="resolution" value="2.70 A"/>
    <property type="chains" value="A=2-375"/>
</dbReference>
<dbReference type="PDB" id="1AXE">
    <property type="method" value="X-ray"/>
    <property type="resolution" value="2.00 A"/>
    <property type="chains" value="A/B=2-375"/>
</dbReference>
<dbReference type="PDB" id="1AXG">
    <property type="method" value="X-ray"/>
    <property type="resolution" value="2.50 A"/>
    <property type="chains" value="A/B/C/D=2-375"/>
</dbReference>
<dbReference type="PDB" id="1BTO">
    <property type="method" value="X-ray"/>
    <property type="resolution" value="2.00 A"/>
    <property type="chains" value="A/B/C/D=2-375"/>
</dbReference>
<dbReference type="PDB" id="1HET">
    <property type="method" value="X-ray"/>
    <property type="resolution" value="1.15 A"/>
    <property type="chains" value="A/B=2-375"/>
</dbReference>
<dbReference type="PDB" id="1HEU">
    <property type="method" value="X-ray"/>
    <property type="resolution" value="1.15 A"/>
    <property type="chains" value="A/B=2-375"/>
</dbReference>
<dbReference type="PDB" id="1HF3">
    <property type="method" value="X-ray"/>
    <property type="resolution" value="1.95 A"/>
    <property type="chains" value="A/B=2-375"/>
</dbReference>
<dbReference type="PDB" id="1HLD">
    <property type="method" value="X-ray"/>
    <property type="resolution" value="2.10 A"/>
    <property type="chains" value="A/B=2-375"/>
</dbReference>
<dbReference type="PDB" id="1JU9">
    <property type="method" value="X-ray"/>
    <property type="resolution" value="2.00 A"/>
    <property type="chains" value="A/B=2-375"/>
</dbReference>
<dbReference type="PDB" id="1LDE">
    <property type="method" value="X-ray"/>
    <property type="resolution" value="2.50 A"/>
    <property type="chains" value="A/B/C/D=2-375"/>
</dbReference>
<dbReference type="PDB" id="1LDY">
    <property type="method" value="X-ray"/>
    <property type="resolution" value="2.50 A"/>
    <property type="chains" value="A/B/C/D=2-375"/>
</dbReference>
<dbReference type="PDB" id="1MG0">
    <property type="method" value="X-ray"/>
    <property type="resolution" value="1.80 A"/>
    <property type="chains" value="A/B/C/D=2-375"/>
</dbReference>
<dbReference type="PDB" id="1MGO">
    <property type="method" value="X-ray"/>
    <property type="resolution" value="1.20 A"/>
    <property type="chains" value="A/B=2-375"/>
</dbReference>
<dbReference type="PDB" id="1N8K">
    <property type="method" value="X-ray"/>
    <property type="resolution" value="1.13 A"/>
    <property type="chains" value="A/B=2-375"/>
</dbReference>
<dbReference type="PDB" id="1N92">
    <property type="method" value="X-ray"/>
    <property type="resolution" value="1.47 A"/>
    <property type="chains" value="A/B=2-375"/>
</dbReference>
<dbReference type="PDB" id="1P1R">
    <property type="method" value="X-ray"/>
    <property type="resolution" value="1.57 A"/>
    <property type="chains" value="A/B/C/D=2-375"/>
</dbReference>
<dbReference type="PDB" id="1QLH">
    <property type="method" value="X-ray"/>
    <property type="resolution" value="2.07 A"/>
    <property type="chains" value="A=2-375"/>
</dbReference>
<dbReference type="PDB" id="1QLJ">
    <property type="method" value="X-ray"/>
    <property type="resolution" value="2.80 A"/>
    <property type="chains" value="A=2-375"/>
</dbReference>
<dbReference type="PDB" id="1QV6">
    <property type="method" value="X-ray"/>
    <property type="resolution" value="1.80 A"/>
    <property type="chains" value="A/B=2-375"/>
</dbReference>
<dbReference type="PDB" id="1QV7">
    <property type="method" value="X-ray"/>
    <property type="resolution" value="1.80 A"/>
    <property type="chains" value="A/B=2-375"/>
</dbReference>
<dbReference type="PDB" id="1YE3">
    <property type="method" value="X-ray"/>
    <property type="resolution" value="1.59 A"/>
    <property type="chains" value="A=2-375"/>
</dbReference>
<dbReference type="PDB" id="2JHF">
    <property type="method" value="X-ray"/>
    <property type="resolution" value="1.00 A"/>
    <property type="chains" value="A/B=2-375"/>
</dbReference>
<dbReference type="PDB" id="2JHG">
    <property type="method" value="X-ray"/>
    <property type="resolution" value="1.20 A"/>
    <property type="chains" value="A/B=2-375"/>
</dbReference>
<dbReference type="PDB" id="2OHX">
    <property type="method" value="X-ray"/>
    <property type="resolution" value="1.80 A"/>
    <property type="chains" value="A/B=2-375"/>
</dbReference>
<dbReference type="PDB" id="2OXI">
    <property type="method" value="X-ray"/>
    <property type="resolution" value="2.10 A"/>
    <property type="chains" value="A/B=2-375"/>
</dbReference>
<dbReference type="PDB" id="3BTO">
    <property type="method" value="X-ray"/>
    <property type="resolution" value="1.66 A"/>
    <property type="chains" value="A/B/C/D=2-375"/>
</dbReference>
<dbReference type="PDB" id="3OQ6">
    <property type="method" value="X-ray"/>
    <property type="resolution" value="1.20 A"/>
    <property type="chains" value="A/B=2-375"/>
</dbReference>
<dbReference type="PDB" id="4DWV">
    <property type="method" value="X-ray"/>
    <property type="resolution" value="1.14 A"/>
    <property type="chains" value="A/B=2-375"/>
</dbReference>
<dbReference type="PDB" id="4DXH">
    <property type="method" value="X-ray"/>
    <property type="resolution" value="1.12 A"/>
    <property type="chains" value="A/B=2-375"/>
</dbReference>
<dbReference type="PDB" id="4NFH">
    <property type="method" value="X-ray"/>
    <property type="resolution" value="1.20 A"/>
    <property type="chains" value="A/B=2-375"/>
</dbReference>
<dbReference type="PDB" id="4NFS">
    <property type="method" value="X-ray"/>
    <property type="resolution" value="1.10 A"/>
    <property type="chains" value="A/B=2-375"/>
</dbReference>
<dbReference type="PDB" id="4NG5">
    <property type="method" value="X-ray"/>
    <property type="resolution" value="1.10 A"/>
    <property type="chains" value="A/B=2-375"/>
</dbReference>
<dbReference type="PDB" id="4XD2">
    <property type="method" value="X-ray"/>
    <property type="resolution" value="1.10 A"/>
    <property type="chains" value="A/B=2-375"/>
</dbReference>
<dbReference type="PDB" id="5ADH">
    <property type="method" value="X-ray"/>
    <property type="resolution" value="2.90 A"/>
    <property type="chains" value="A=2-375"/>
</dbReference>
<dbReference type="PDB" id="5CDG">
    <property type="method" value="X-ray"/>
    <property type="resolution" value="1.40 A"/>
    <property type="chains" value="A/B=2-375"/>
</dbReference>
<dbReference type="PDB" id="5CDS">
    <property type="method" value="X-ray"/>
    <property type="resolution" value="1.40 A"/>
    <property type="chains" value="A/B=2-375"/>
</dbReference>
<dbReference type="PDB" id="5CDT">
    <property type="method" value="X-ray"/>
    <property type="resolution" value="1.70 A"/>
    <property type="chains" value="A/B=2-375"/>
</dbReference>
<dbReference type="PDB" id="5CDU">
    <property type="method" value="X-ray"/>
    <property type="resolution" value="1.60 A"/>
    <property type="chains" value="A/B=2-375"/>
</dbReference>
<dbReference type="PDB" id="5KCP">
    <property type="method" value="X-ray"/>
    <property type="resolution" value="1.10 A"/>
    <property type="chains" value="A/B=2-375"/>
</dbReference>
<dbReference type="PDB" id="5KCZ">
    <property type="method" value="X-ray"/>
    <property type="resolution" value="1.14 A"/>
    <property type="chains" value="A/B=2-375"/>
</dbReference>
<dbReference type="PDB" id="5KJ1">
    <property type="method" value="X-ray"/>
    <property type="resolution" value="1.20 A"/>
    <property type="chains" value="A/B=2-375"/>
</dbReference>
<dbReference type="PDB" id="5KJ6">
    <property type="method" value="X-ray"/>
    <property type="resolution" value="1.14 A"/>
    <property type="chains" value="A/B=2-375"/>
</dbReference>
<dbReference type="PDB" id="5KJC">
    <property type="method" value="X-ray"/>
    <property type="resolution" value="1.20 A"/>
    <property type="chains" value="A/B=2-375"/>
</dbReference>
<dbReference type="PDB" id="5KJE">
    <property type="method" value="X-ray"/>
    <property type="resolution" value="1.26 A"/>
    <property type="chains" value="A/B=2-375"/>
</dbReference>
<dbReference type="PDB" id="5KJF">
    <property type="method" value="X-ray"/>
    <property type="resolution" value="1.20 A"/>
    <property type="chains" value="A/B=2-375"/>
</dbReference>
<dbReference type="PDB" id="5VJ5">
    <property type="method" value="X-ray"/>
    <property type="resolution" value="1.90 A"/>
    <property type="chains" value="A/B=2-375"/>
</dbReference>
<dbReference type="PDB" id="5VJG">
    <property type="method" value="X-ray"/>
    <property type="resolution" value="1.90 A"/>
    <property type="chains" value="A=2-375"/>
</dbReference>
<dbReference type="PDB" id="5VKR">
    <property type="method" value="X-ray"/>
    <property type="resolution" value="1.80 A"/>
    <property type="chains" value="A=2-375"/>
</dbReference>
<dbReference type="PDB" id="5VL0">
    <property type="method" value="X-ray"/>
    <property type="resolution" value="1.20 A"/>
    <property type="chains" value="A/B/C/D=2-375"/>
</dbReference>
<dbReference type="PDB" id="5VN1">
    <property type="method" value="X-ray"/>
    <property type="resolution" value="1.25 A"/>
    <property type="chains" value="A/B/C/D=2-375"/>
</dbReference>
<dbReference type="PDB" id="6ADH">
    <property type="method" value="X-ray"/>
    <property type="resolution" value="2.90 A"/>
    <property type="chains" value="A/B=2-375"/>
</dbReference>
<dbReference type="PDB" id="6CXX">
    <property type="method" value="X-ray"/>
    <property type="resolution" value="1.26 A"/>
    <property type="chains" value="A/B=2-375"/>
</dbReference>
<dbReference type="PDB" id="6CY3">
    <property type="method" value="X-ray"/>
    <property type="resolution" value="2.30 A"/>
    <property type="chains" value="A=2-375"/>
</dbReference>
<dbReference type="PDB" id="6NBB">
    <property type="method" value="EM"/>
    <property type="resolution" value="2.90 A"/>
    <property type="chains" value="A/B=2-375"/>
</dbReference>
<dbReference type="PDB" id="6O91">
    <property type="method" value="X-ray"/>
    <property type="resolution" value="1.10 A"/>
    <property type="chains" value="A/B=2-375"/>
</dbReference>
<dbReference type="PDB" id="6OA7">
    <property type="method" value="X-ray"/>
    <property type="resolution" value="1.10 A"/>
    <property type="chains" value="A/B=2-375"/>
</dbReference>
<dbReference type="PDB" id="6OWM">
    <property type="method" value="X-ray"/>
    <property type="resolution" value="1.10 A"/>
    <property type="chains" value="A/B=2-375"/>
</dbReference>
<dbReference type="PDB" id="6OWP">
    <property type="method" value="X-ray"/>
    <property type="resolution" value="1.14 A"/>
    <property type="chains" value="A/B=2-375"/>
</dbReference>
<dbReference type="PDB" id="6XT2">
    <property type="method" value="X-ray"/>
    <property type="resolution" value="1.55 A"/>
    <property type="chains" value="A/B/C/D=2-375"/>
</dbReference>
<dbReference type="PDB" id="7ADH">
    <property type="method" value="X-ray"/>
    <property type="resolution" value="3.20 A"/>
    <property type="chains" value="A=2-375"/>
</dbReference>
<dbReference type="PDB" id="7JQA">
    <property type="method" value="X-ray"/>
    <property type="resolution" value="1.53 A"/>
    <property type="chains" value="A/B/C/D=2-375"/>
</dbReference>
<dbReference type="PDB" id="7K35">
    <property type="method" value="X-ray"/>
    <property type="resolution" value="1.20 A"/>
    <property type="chains" value="A/B/C/D=2-375"/>
</dbReference>
<dbReference type="PDB" id="7RM6">
    <property type="method" value="X-ray"/>
    <property type="resolution" value="1.43 A"/>
    <property type="chains" value="A/B=2-375"/>
</dbReference>
<dbReference type="PDB" id="7U9N">
    <property type="method" value="X-ray"/>
    <property type="resolution" value="2.20 A"/>
    <property type="chains" value="A/B/C/D=2-375"/>
</dbReference>
<dbReference type="PDB" id="7UA6">
    <property type="method" value="X-ray"/>
    <property type="resolution" value="1.10 A"/>
    <property type="chains" value="A/B=2-375"/>
</dbReference>
<dbReference type="PDB" id="7UC9">
    <property type="method" value="X-ray"/>
    <property type="resolution" value="1.10 A"/>
    <property type="chains" value="A/B=2-375"/>
</dbReference>
<dbReference type="PDB" id="7UCA">
    <property type="method" value="X-ray"/>
    <property type="resolution" value="1.10 A"/>
    <property type="chains" value="A/B=2-375"/>
</dbReference>
<dbReference type="PDB" id="7UCU">
    <property type="method" value="X-ray"/>
    <property type="resolution" value="1.10 A"/>
    <property type="chains" value="A/B=2-375"/>
</dbReference>
<dbReference type="PDB" id="7UDD">
    <property type="method" value="X-ray"/>
    <property type="resolution" value="1.10 A"/>
    <property type="chains" value="A/B=2-375"/>
</dbReference>
<dbReference type="PDB" id="7UDE">
    <property type="method" value="X-ray"/>
    <property type="resolution" value="1.10 A"/>
    <property type="chains" value="A/B=2-375"/>
</dbReference>
<dbReference type="PDB" id="7UDR">
    <property type="method" value="X-ray"/>
    <property type="resolution" value="1.20 A"/>
    <property type="chains" value="A/B=2-375"/>
</dbReference>
<dbReference type="PDB" id="7UEC">
    <property type="method" value="X-ray"/>
    <property type="resolution" value="1.20 A"/>
    <property type="chains" value="A/B=2-375"/>
</dbReference>
<dbReference type="PDB" id="7UEE">
    <property type="method" value="X-ray"/>
    <property type="resolution" value="1.20 A"/>
    <property type="chains" value="A/B=2-375"/>
</dbReference>
<dbReference type="PDB" id="7UEF">
    <property type="method" value="X-ray"/>
    <property type="resolution" value="1.20 A"/>
    <property type="chains" value="A/B=2-375"/>
</dbReference>
<dbReference type="PDB" id="7UEI">
    <property type="method" value="X-ray"/>
    <property type="resolution" value="1.20 A"/>
    <property type="chains" value="A/B=2-375"/>
</dbReference>
<dbReference type="PDB" id="7UEJ">
    <property type="method" value="X-ray"/>
    <property type="resolution" value="1.20 A"/>
    <property type="chains" value="A/B=2-375"/>
</dbReference>
<dbReference type="PDB" id="7UHV">
    <property type="method" value="X-ray"/>
    <property type="resolution" value="1.30 A"/>
    <property type="chains" value="A/B=2-375"/>
</dbReference>
<dbReference type="PDB" id="7UHW">
    <property type="method" value="X-ray"/>
    <property type="resolution" value="1.30 A"/>
    <property type="chains" value="A/B=2-375"/>
</dbReference>
<dbReference type="PDB" id="7UHX">
    <property type="method" value="X-ray"/>
    <property type="resolution" value="1.30 A"/>
    <property type="chains" value="A/B=2-375"/>
</dbReference>
<dbReference type="PDB" id="7UQ9">
    <property type="method" value="X-ray"/>
    <property type="resolution" value="1.40 A"/>
    <property type="chains" value="A/B=2-375"/>
</dbReference>
<dbReference type="PDB" id="7UTW">
    <property type="method" value="X-ray"/>
    <property type="resolution" value="1.33 A"/>
    <property type="chains" value="A/B=2-375"/>
</dbReference>
<dbReference type="PDB" id="8ADH">
    <property type="method" value="X-ray"/>
    <property type="resolution" value="2.40 A"/>
    <property type="chains" value="A=2-375"/>
</dbReference>
<dbReference type="PDB" id="8E7U">
    <property type="method" value="X-ray"/>
    <property type="resolution" value="1.19 A"/>
    <property type="chains" value="A/B=2-375"/>
</dbReference>
<dbReference type="PDB" id="8ECS">
    <property type="method" value="X-ray"/>
    <property type="resolution" value="1.20 A"/>
    <property type="chains" value="A/B=2-375"/>
</dbReference>
<dbReference type="PDB" id="8ECT">
    <property type="method" value="X-ray"/>
    <property type="resolution" value="1.60 A"/>
    <property type="chains" value="A/B=2-375"/>
</dbReference>
<dbReference type="PDB" id="8ECU">
    <property type="method" value="X-ray"/>
    <property type="resolution" value="1.30 A"/>
    <property type="chains" value="A/B=2-375"/>
</dbReference>
<dbReference type="PDB" id="8EE3">
    <property type="method" value="X-ray"/>
    <property type="resolution" value="1.55 A"/>
    <property type="chains" value="A/B=2-375"/>
</dbReference>
<dbReference type="PDB" id="8EIW">
    <property type="method" value="X-ray"/>
    <property type="resolution" value="1.65 A"/>
    <property type="chains" value="A/B=2-375"/>
</dbReference>
<dbReference type="PDB" id="8EIX">
    <property type="method" value="X-ray"/>
    <property type="resolution" value="2.46 A"/>
    <property type="chains" value="A/B=2-375"/>
</dbReference>
<dbReference type="PDB" id="8EIY">
    <property type="method" value="X-ray"/>
    <property type="resolution" value="2.55 A"/>
    <property type="chains" value="A/B=2-375"/>
</dbReference>
<dbReference type="PDB" id="8G2L">
    <property type="method" value="X-ray"/>
    <property type="resolution" value="1.42 A"/>
    <property type="chains" value="A/B=2-375"/>
</dbReference>
<dbReference type="PDB" id="8G2S">
    <property type="method" value="X-ray"/>
    <property type="resolution" value="1.45 A"/>
    <property type="chains" value="A/B=2-375"/>
</dbReference>
<dbReference type="PDB" id="8G2X">
    <property type="method" value="X-ray"/>
    <property type="resolution" value="1.47 A"/>
    <property type="chains" value="A/B=2-375"/>
</dbReference>
<dbReference type="PDB" id="8G39">
    <property type="method" value="X-ray"/>
    <property type="resolution" value="1.42 A"/>
    <property type="chains" value="A/B=2-375"/>
</dbReference>
<dbReference type="PDB" id="8G41">
    <property type="method" value="X-ray"/>
    <property type="resolution" value="1.50 A"/>
    <property type="chains" value="A/B=2-375"/>
</dbReference>
<dbReference type="PDB" id="8G4V">
    <property type="method" value="X-ray"/>
    <property type="resolution" value="1.20 A"/>
    <property type="chains" value="A/B=2-375"/>
</dbReference>
<dbReference type="PDBsum" id="1A71"/>
<dbReference type="PDBsum" id="1A72"/>
<dbReference type="PDBsum" id="1ADB"/>
<dbReference type="PDBsum" id="1ADC"/>
<dbReference type="PDBsum" id="1ADF"/>
<dbReference type="PDBsum" id="1ADG"/>
<dbReference type="PDBsum" id="1AXE"/>
<dbReference type="PDBsum" id="1AXG"/>
<dbReference type="PDBsum" id="1BTO"/>
<dbReference type="PDBsum" id="1HET"/>
<dbReference type="PDBsum" id="1HEU"/>
<dbReference type="PDBsum" id="1HF3"/>
<dbReference type="PDBsum" id="1HLD"/>
<dbReference type="PDBsum" id="1JU9"/>
<dbReference type="PDBsum" id="1LDE"/>
<dbReference type="PDBsum" id="1LDY"/>
<dbReference type="PDBsum" id="1MG0"/>
<dbReference type="PDBsum" id="1MGO"/>
<dbReference type="PDBsum" id="1N8K"/>
<dbReference type="PDBsum" id="1N92"/>
<dbReference type="PDBsum" id="1P1R"/>
<dbReference type="PDBsum" id="1QLH"/>
<dbReference type="PDBsum" id="1QLJ"/>
<dbReference type="PDBsum" id="1QV6"/>
<dbReference type="PDBsum" id="1QV7"/>
<dbReference type="PDBsum" id="1YE3"/>
<dbReference type="PDBsum" id="2JHF"/>
<dbReference type="PDBsum" id="2JHG"/>
<dbReference type="PDBsum" id="2OHX"/>
<dbReference type="PDBsum" id="2OXI"/>
<dbReference type="PDBsum" id="3BTO"/>
<dbReference type="PDBsum" id="3OQ6"/>
<dbReference type="PDBsum" id="4DWV"/>
<dbReference type="PDBsum" id="4DXH"/>
<dbReference type="PDBsum" id="4NFH"/>
<dbReference type="PDBsum" id="4NFS"/>
<dbReference type="PDBsum" id="4NG5"/>
<dbReference type="PDBsum" id="4XD2"/>
<dbReference type="PDBsum" id="5ADH"/>
<dbReference type="PDBsum" id="5CDG"/>
<dbReference type="PDBsum" id="5CDS"/>
<dbReference type="PDBsum" id="5CDT"/>
<dbReference type="PDBsum" id="5CDU"/>
<dbReference type="PDBsum" id="5KCP"/>
<dbReference type="PDBsum" id="5KCZ"/>
<dbReference type="PDBsum" id="5KJ1"/>
<dbReference type="PDBsum" id="5KJ6"/>
<dbReference type="PDBsum" id="5KJC"/>
<dbReference type="PDBsum" id="5KJE"/>
<dbReference type="PDBsum" id="5KJF"/>
<dbReference type="PDBsum" id="5VJ5"/>
<dbReference type="PDBsum" id="5VJG"/>
<dbReference type="PDBsum" id="5VKR"/>
<dbReference type="PDBsum" id="5VL0"/>
<dbReference type="PDBsum" id="5VN1"/>
<dbReference type="PDBsum" id="6ADH"/>
<dbReference type="PDBsum" id="6CXX"/>
<dbReference type="PDBsum" id="6CY3"/>
<dbReference type="PDBsum" id="6NBB"/>
<dbReference type="PDBsum" id="6O91"/>
<dbReference type="PDBsum" id="6OA7"/>
<dbReference type="PDBsum" id="6OWM"/>
<dbReference type="PDBsum" id="6OWP"/>
<dbReference type="PDBsum" id="6XT2"/>
<dbReference type="PDBsum" id="7ADH"/>
<dbReference type="PDBsum" id="7JQA"/>
<dbReference type="PDBsum" id="7K35"/>
<dbReference type="PDBsum" id="7RM6"/>
<dbReference type="PDBsum" id="7U9N"/>
<dbReference type="PDBsum" id="7UA6"/>
<dbReference type="PDBsum" id="7UC9"/>
<dbReference type="PDBsum" id="7UCA"/>
<dbReference type="PDBsum" id="7UCU"/>
<dbReference type="PDBsum" id="7UDD"/>
<dbReference type="PDBsum" id="7UDE"/>
<dbReference type="PDBsum" id="7UDR"/>
<dbReference type="PDBsum" id="7UEC"/>
<dbReference type="PDBsum" id="7UEE"/>
<dbReference type="PDBsum" id="7UEF"/>
<dbReference type="PDBsum" id="7UEI"/>
<dbReference type="PDBsum" id="7UEJ"/>
<dbReference type="PDBsum" id="7UHV"/>
<dbReference type="PDBsum" id="7UHW"/>
<dbReference type="PDBsum" id="7UHX"/>
<dbReference type="PDBsum" id="7UQ9"/>
<dbReference type="PDBsum" id="7UTW"/>
<dbReference type="PDBsum" id="8ADH"/>
<dbReference type="PDBsum" id="8E7U"/>
<dbReference type="PDBsum" id="8ECS"/>
<dbReference type="PDBsum" id="8ECT"/>
<dbReference type="PDBsum" id="8ECU"/>
<dbReference type="PDBsum" id="8EE3"/>
<dbReference type="PDBsum" id="8EIW"/>
<dbReference type="PDBsum" id="8EIX"/>
<dbReference type="PDBsum" id="8EIY"/>
<dbReference type="PDBsum" id="8G2L"/>
<dbReference type="PDBsum" id="8G2S"/>
<dbReference type="PDBsum" id="8G2X"/>
<dbReference type="PDBsum" id="8G39"/>
<dbReference type="PDBsum" id="8G41"/>
<dbReference type="PDBsum" id="8G4V"/>
<dbReference type="EMDB" id="EMD-0406"/>
<dbReference type="SMR" id="P00327"/>
<dbReference type="STRING" id="9796.ENSECAP00000033917"/>
<dbReference type="BindingDB" id="P00327"/>
<dbReference type="ChEMBL" id="CHEMBL2111372"/>
<dbReference type="DrugCentral" id="P00327"/>
<dbReference type="iPTMnet" id="P00327"/>
<dbReference type="PaxDb" id="9796-ENSECAP00000033917"/>
<dbReference type="PeptideAtlas" id="P00327"/>
<dbReference type="GeneID" id="100034242"/>
<dbReference type="KEGG" id="ecb:100034242"/>
<dbReference type="InParanoid" id="P00327"/>
<dbReference type="OrthoDB" id="417550at2759"/>
<dbReference type="BRENDA" id="1.1.1.1">
    <property type="organism ID" value="2120"/>
</dbReference>
<dbReference type="SABIO-RK" id="P00327"/>
<dbReference type="EvolutionaryTrace" id="P00327"/>
<dbReference type="PRO" id="PR:P00327"/>
<dbReference type="Proteomes" id="UP000002281">
    <property type="component" value="Unplaced"/>
</dbReference>
<dbReference type="GO" id="GO:0005829">
    <property type="term" value="C:cytosol"/>
    <property type="evidence" value="ECO:0000318"/>
    <property type="project" value="GO_Central"/>
</dbReference>
<dbReference type="GO" id="GO:0004745">
    <property type="term" value="F:all-trans-retinol dehydrogenase (NAD+) activity"/>
    <property type="evidence" value="ECO:0000318"/>
    <property type="project" value="GO_Central"/>
</dbReference>
<dbReference type="GO" id="GO:0008270">
    <property type="term" value="F:zinc ion binding"/>
    <property type="evidence" value="ECO:0000318"/>
    <property type="project" value="GO_Central"/>
</dbReference>
<dbReference type="GO" id="GO:0042573">
    <property type="term" value="P:retinoic acid metabolic process"/>
    <property type="evidence" value="ECO:0000318"/>
    <property type="project" value="GO_Central"/>
</dbReference>
<dbReference type="GO" id="GO:0042572">
    <property type="term" value="P:retinol metabolic process"/>
    <property type="evidence" value="ECO:0000318"/>
    <property type="project" value="GO_Central"/>
</dbReference>
<dbReference type="CDD" id="cd08299">
    <property type="entry name" value="alcohol_DH_class_I_II_IV"/>
    <property type="match status" value="1"/>
</dbReference>
<dbReference type="FunFam" id="3.40.50.720:FF:000003">
    <property type="entry name" value="S-(hydroxymethyl)glutathione dehydrogenase"/>
    <property type="match status" value="1"/>
</dbReference>
<dbReference type="FunFam" id="3.90.180.10:FF:000001">
    <property type="entry name" value="S-(hydroxymethyl)glutathione dehydrogenase"/>
    <property type="match status" value="1"/>
</dbReference>
<dbReference type="Gene3D" id="3.90.180.10">
    <property type="entry name" value="Medium-chain alcohol dehydrogenases, catalytic domain"/>
    <property type="match status" value="1"/>
</dbReference>
<dbReference type="Gene3D" id="3.40.50.720">
    <property type="entry name" value="NAD(P)-binding Rossmann-like Domain"/>
    <property type="match status" value="1"/>
</dbReference>
<dbReference type="InterPro" id="IPR013149">
    <property type="entry name" value="ADH-like_C"/>
</dbReference>
<dbReference type="InterPro" id="IPR013154">
    <property type="entry name" value="ADH-like_N"/>
</dbReference>
<dbReference type="InterPro" id="IPR002328">
    <property type="entry name" value="ADH_Zn_CS"/>
</dbReference>
<dbReference type="InterPro" id="IPR011032">
    <property type="entry name" value="GroES-like_sf"/>
</dbReference>
<dbReference type="InterPro" id="IPR036291">
    <property type="entry name" value="NAD(P)-bd_dom_sf"/>
</dbReference>
<dbReference type="InterPro" id="IPR020843">
    <property type="entry name" value="PKS_ER"/>
</dbReference>
<dbReference type="PANTHER" id="PTHR43880">
    <property type="entry name" value="ALCOHOL DEHYDROGENASE"/>
    <property type="match status" value="1"/>
</dbReference>
<dbReference type="PANTHER" id="PTHR43880:SF1">
    <property type="entry name" value="ALCOHOL DEHYDROGENASE 1A"/>
    <property type="match status" value="1"/>
</dbReference>
<dbReference type="Pfam" id="PF08240">
    <property type="entry name" value="ADH_N"/>
    <property type="match status" value="1"/>
</dbReference>
<dbReference type="Pfam" id="PF00107">
    <property type="entry name" value="ADH_zinc_N"/>
    <property type="match status" value="1"/>
</dbReference>
<dbReference type="SMART" id="SM00829">
    <property type="entry name" value="PKS_ER"/>
    <property type="match status" value="1"/>
</dbReference>
<dbReference type="SUPFAM" id="SSF50129">
    <property type="entry name" value="GroES-like"/>
    <property type="match status" value="2"/>
</dbReference>
<dbReference type="SUPFAM" id="SSF51735">
    <property type="entry name" value="NAD(P)-binding Rossmann-fold domains"/>
    <property type="match status" value="1"/>
</dbReference>
<dbReference type="PROSITE" id="PS00059">
    <property type="entry name" value="ADH_ZINC"/>
    <property type="match status" value="1"/>
</dbReference>
<proteinExistence type="evidence at protein level"/>
<comment type="catalytic activity">
    <reaction>
        <text>a primary alcohol + NAD(+) = an aldehyde + NADH + H(+)</text>
        <dbReference type="Rhea" id="RHEA:10736"/>
        <dbReference type="ChEBI" id="CHEBI:15378"/>
        <dbReference type="ChEBI" id="CHEBI:15734"/>
        <dbReference type="ChEBI" id="CHEBI:17478"/>
        <dbReference type="ChEBI" id="CHEBI:57540"/>
        <dbReference type="ChEBI" id="CHEBI:57945"/>
        <dbReference type="EC" id="1.1.1.1"/>
    </reaction>
</comment>
<comment type="catalytic activity">
    <reaction>
        <text>a secondary alcohol + NAD(+) = a ketone + NADH + H(+)</text>
        <dbReference type="Rhea" id="RHEA:10740"/>
        <dbReference type="ChEBI" id="CHEBI:15378"/>
        <dbReference type="ChEBI" id="CHEBI:17087"/>
        <dbReference type="ChEBI" id="CHEBI:35681"/>
        <dbReference type="ChEBI" id="CHEBI:57540"/>
        <dbReference type="ChEBI" id="CHEBI:57945"/>
        <dbReference type="EC" id="1.1.1.1"/>
    </reaction>
</comment>
<comment type="cofactor">
    <cofactor evidence="2">
        <name>Zn(2+)</name>
        <dbReference type="ChEBI" id="CHEBI:29105"/>
    </cofactor>
    <text evidence="2">Binds 2 Zn(2+) ions per subunit.</text>
</comment>
<comment type="subunit">
    <text>Dimer of identical or non-identical chains of two types (E and S) coded by 2 separate genes at different loci.</text>
</comment>
<comment type="subcellular location">
    <subcellularLocation>
        <location>Cytoplasm</location>
    </subcellularLocation>
</comment>
<comment type="similarity">
    <text evidence="5">Belongs to the zinc-containing alcohol dehydrogenase family. Class-I subfamily.</text>
</comment>
<accession>P00327</accession>